<keyword id="KW-0106">Calcium</keyword>
<keyword id="KW-0119">Carbohydrate metabolism</keyword>
<keyword id="KW-1003">Cell membrane</keyword>
<keyword id="KW-0328">Glycosyltransferase</keyword>
<keyword id="KW-0472">Membrane</keyword>
<keyword id="KW-0479">Metal-binding</keyword>
<keyword id="KW-0732">Signal</keyword>
<keyword id="KW-0808">Transferase</keyword>
<keyword id="KW-0812">Transmembrane</keyword>
<keyword id="KW-1133">Transmembrane helix</keyword>
<accession>Q55242</accession>
<proteinExistence type="inferred from homology"/>
<reference key="1">
    <citation type="journal article" date="1993" name="J. Bacteriol.">
        <title>The cell-bound fructosyltransferase of Streptococcus salivarius: the carboxyl terminus specifies attachment in a Streptococcus gordonii model system.</title>
        <authorList>
            <person name="Rathsam C."/>
            <person name="Giffard P.M."/>
            <person name="Jacques N.A."/>
        </authorList>
    </citation>
    <scope>NUCLEOTIDE SEQUENCE [GENOMIC DNA]</scope>
    <scope>SUBCELLULAR LOCATION</scope>
    <source>
        <strain>ATCC 25975</strain>
    </source>
</reference>
<feature type="signal peptide" evidence="2">
    <location>
        <begin position="1"/>
        <end position="52"/>
    </location>
</feature>
<feature type="chain" id="PRO_0000012251" description="Levansucrase">
    <location>
        <begin position="53"/>
        <end position="969"/>
    </location>
</feature>
<feature type="transmembrane region" description="Helical" evidence="2">
    <location>
        <begin position="938"/>
        <end position="958"/>
    </location>
</feature>
<feature type="region of interest" description="Disordered" evidence="3">
    <location>
        <begin position="89"/>
        <end position="169"/>
    </location>
</feature>
<feature type="region of interest" description="Disordered" evidence="3">
    <location>
        <begin position="746"/>
        <end position="843"/>
    </location>
</feature>
<feature type="region of interest" description="Disordered" evidence="3">
    <location>
        <begin position="860"/>
        <end position="934"/>
    </location>
</feature>
<feature type="compositionally biased region" description="Low complexity" evidence="3">
    <location>
        <begin position="89"/>
        <end position="103"/>
    </location>
</feature>
<feature type="compositionally biased region" description="Polar residues" evidence="3">
    <location>
        <begin position="106"/>
        <end position="116"/>
    </location>
</feature>
<feature type="compositionally biased region" description="Low complexity" evidence="3">
    <location>
        <begin position="124"/>
        <end position="166"/>
    </location>
</feature>
<feature type="compositionally biased region" description="Basic and acidic residues" evidence="3">
    <location>
        <begin position="747"/>
        <end position="758"/>
    </location>
</feature>
<feature type="compositionally biased region" description="Polar residues" evidence="3">
    <location>
        <begin position="776"/>
        <end position="789"/>
    </location>
</feature>
<feature type="compositionally biased region" description="Basic and acidic residues" evidence="3">
    <location>
        <begin position="872"/>
        <end position="910"/>
    </location>
</feature>
<feature type="compositionally biased region" description="Polar residues" evidence="3">
    <location>
        <begin position="924"/>
        <end position="934"/>
    </location>
</feature>
<feature type="active site" description="Nucleophile" evidence="1">
    <location>
        <position position="287"/>
    </location>
</feature>
<feature type="active site" description="Proton donor/acceptor" evidence="1">
    <location>
        <position position="547"/>
    </location>
</feature>
<feature type="binding site" evidence="1">
    <location>
        <position position="286"/>
    </location>
    <ligand>
        <name>sucrose</name>
        <dbReference type="ChEBI" id="CHEBI:17992"/>
    </ligand>
</feature>
<feature type="binding site" evidence="1">
    <location>
        <position position="287"/>
    </location>
    <ligand>
        <name>sucrose</name>
        <dbReference type="ChEBI" id="CHEBI:17992"/>
    </ligand>
</feature>
<feature type="binding site" evidence="1">
    <location>
        <position position="356"/>
    </location>
    <ligand>
        <name>sucrose</name>
        <dbReference type="ChEBI" id="CHEBI:17992"/>
    </ligand>
</feature>
<feature type="binding site" evidence="1">
    <location>
        <position position="443"/>
    </location>
    <ligand>
        <name>Ca(2+)</name>
        <dbReference type="ChEBI" id="CHEBI:29108"/>
    </ligand>
</feature>
<feature type="binding site" evidence="1">
    <location>
        <position position="448"/>
    </location>
    <ligand>
        <name>sucrose</name>
        <dbReference type="ChEBI" id="CHEBI:17992"/>
    </ligand>
</feature>
<feature type="binding site" evidence="1">
    <location>
        <position position="449"/>
    </location>
    <ligand>
        <name>sucrose</name>
        <dbReference type="ChEBI" id="CHEBI:17992"/>
    </ligand>
</feature>
<feature type="binding site" evidence="1">
    <location>
        <position position="473"/>
    </location>
    <ligand>
        <name>Ca(2+)</name>
        <dbReference type="ChEBI" id="CHEBI:29108"/>
    </ligand>
</feature>
<feature type="binding site" evidence="1">
    <location>
        <position position="512"/>
    </location>
    <ligand>
        <name>Ca(2+)</name>
        <dbReference type="ChEBI" id="CHEBI:29108"/>
    </ligand>
</feature>
<feature type="binding site" evidence="1">
    <location>
        <position position="544"/>
    </location>
    <ligand>
        <name>Ca(2+)</name>
        <dbReference type="ChEBI" id="CHEBI:29108"/>
    </ligand>
</feature>
<feature type="binding site" evidence="1">
    <location>
        <position position="545"/>
    </location>
    <ligand>
        <name>sucrose</name>
        <dbReference type="ChEBI" id="CHEBI:17992"/>
    </ligand>
</feature>
<feature type="binding site" evidence="1">
    <location>
        <position position="565"/>
    </location>
    <ligand>
        <name>sucrose</name>
        <dbReference type="ChEBI" id="CHEBI:17992"/>
    </ligand>
</feature>
<feature type="site" description="Transition state stabilizer" evidence="1">
    <location>
        <position position="449"/>
    </location>
</feature>
<dbReference type="EC" id="2.4.1.10" evidence="7"/>
<dbReference type="EMBL" id="L08445">
    <property type="protein sequence ID" value="AAA71925.1"/>
    <property type="molecule type" value="Genomic_DNA"/>
</dbReference>
<dbReference type="RefSeq" id="WP_045771731.1">
    <property type="nucleotide sequence ID" value="NZ_QSAU01000001.1"/>
</dbReference>
<dbReference type="SMR" id="Q55242"/>
<dbReference type="STRING" id="1304.HMPREF3219_0200022"/>
<dbReference type="CAZy" id="GH68">
    <property type="family name" value="Glycoside Hydrolase Family 68"/>
</dbReference>
<dbReference type="SABIO-RK" id="Q55242"/>
<dbReference type="GO" id="GO:0009986">
    <property type="term" value="C:cell surface"/>
    <property type="evidence" value="ECO:0007669"/>
    <property type="project" value="UniProtKB-SubCell"/>
</dbReference>
<dbReference type="GO" id="GO:0005886">
    <property type="term" value="C:plasma membrane"/>
    <property type="evidence" value="ECO:0007669"/>
    <property type="project" value="UniProtKB-SubCell"/>
</dbReference>
<dbReference type="GO" id="GO:0050053">
    <property type="term" value="F:levansucrase activity"/>
    <property type="evidence" value="ECO:0007669"/>
    <property type="project" value="UniProtKB-EC"/>
</dbReference>
<dbReference type="GO" id="GO:0046872">
    <property type="term" value="F:metal ion binding"/>
    <property type="evidence" value="ECO:0007669"/>
    <property type="project" value="UniProtKB-KW"/>
</dbReference>
<dbReference type="GO" id="GO:0009758">
    <property type="term" value="P:carbohydrate utilization"/>
    <property type="evidence" value="ECO:0007669"/>
    <property type="project" value="InterPro"/>
</dbReference>
<dbReference type="CDD" id="cd08997">
    <property type="entry name" value="GH68"/>
    <property type="match status" value="1"/>
</dbReference>
<dbReference type="Gene3D" id="2.115.10.20">
    <property type="entry name" value="Glycosyl hydrolase domain, family 43"/>
    <property type="match status" value="1"/>
</dbReference>
<dbReference type="InterPro" id="IPR003469">
    <property type="entry name" value="Glyco_hydro_68"/>
</dbReference>
<dbReference type="InterPro" id="IPR023296">
    <property type="entry name" value="Glyco_hydro_beta-prop_sf"/>
</dbReference>
<dbReference type="InterPro" id="IPR005877">
    <property type="entry name" value="YSIRK_signal_dom"/>
</dbReference>
<dbReference type="NCBIfam" id="TIGR01168">
    <property type="entry name" value="YSIRK_signal"/>
    <property type="match status" value="1"/>
</dbReference>
<dbReference type="Pfam" id="PF02435">
    <property type="entry name" value="Glyco_hydro_68"/>
    <property type="match status" value="1"/>
</dbReference>
<dbReference type="Pfam" id="PF04650">
    <property type="entry name" value="YSIRK_signal"/>
    <property type="match status" value="1"/>
</dbReference>
<dbReference type="SUPFAM" id="SSF75005">
    <property type="entry name" value="Arabinanase/levansucrase/invertase"/>
    <property type="match status" value="1"/>
</dbReference>
<gene>
    <name evidence="5" type="primary">ftf</name>
</gene>
<evidence type="ECO:0000250" key="1">
    <source>
        <dbReference type="UniProtKB" id="P05655"/>
    </source>
</evidence>
<evidence type="ECO:0000255" key="2"/>
<evidence type="ECO:0000256" key="3">
    <source>
        <dbReference type="SAM" id="MobiDB-lite"/>
    </source>
</evidence>
<evidence type="ECO:0000269" key="4">
    <source>
    </source>
</evidence>
<evidence type="ECO:0000303" key="5">
    <source>
    </source>
</evidence>
<evidence type="ECO:0000305" key="6"/>
<evidence type="ECO:0000305" key="7">
    <source>
    </source>
</evidence>
<name>LSC_STRSL</name>
<comment type="function">
    <text evidence="1">Catalyzes the synthesis of levan, a fructose polymer, by transferring the fructosyl moiety from sucrose to a growing acceptor molecule (By similarity). Also displays sucrose hydrolase activity (By similarity).</text>
</comment>
<comment type="catalytic activity">
    <reaction evidence="7">
        <text>[6)-beta-D-fructofuranosyl-(2-&gt;](n) alpha-D-glucopyranoside + sucrose = [6)-beta-D-fructofuranosyl-(2-&gt;](n+1) alpha-D-glucopyranoside + D-glucose</text>
        <dbReference type="Rhea" id="RHEA:13653"/>
        <dbReference type="Rhea" id="RHEA-COMP:13093"/>
        <dbReference type="Rhea" id="RHEA-COMP:13094"/>
        <dbReference type="ChEBI" id="CHEBI:4167"/>
        <dbReference type="ChEBI" id="CHEBI:17992"/>
        <dbReference type="ChEBI" id="CHEBI:134464"/>
        <dbReference type="EC" id="2.4.1.10"/>
    </reaction>
</comment>
<comment type="activity regulation">
    <text evidence="1">Ca(2+) may play an important structural role and promote stability of levansucrase.</text>
</comment>
<comment type="subcellular location">
    <subcellularLocation>
        <location evidence="6">Cell membrane</location>
        <topology evidence="2">Single-pass membrane protein</topology>
        <orientation evidence="7">Extracellular side</orientation>
    </subcellularLocation>
    <subcellularLocation>
        <location evidence="4">Cell surface</location>
    </subcellularLocation>
</comment>
<comment type="similarity">
    <text evidence="6">Belongs to the glycosyl hydrolase 68 family.</text>
</comment>
<sequence>MDITVNSQSNTVAPKQAECKKMRYSIRKVATVGATSALVGTLAFLGATQVKADQVTETAPAVATATATPETSTASLTVASETATSVATSEAVESSVAHSEVATKPVTETQPSNTTPSVVEEKASSTVVTSSSDATTPSATVAAVSAPAHTSEAAVEAPTSTASSEAADTHTEVDLKVSENSAANANLSKLNGRIKSIVEENMTSDQIVALTEEEIKALNKVDFSDDAIKGTGTSLTYRNLKDIVASFLKQDSKLAVPYFKADTIINMPAFNTVDAQTMKKEEIDVWDSWPVQDAKSGVVSNWNGYQLVISMAGAPNKNSNHIYLLYRKYGDNDFTHWKNAGPIFGYNALEDDQQWSGSATVNSDGSIQLYYTKNDTSGGKLNWQQLASATLNLAVENDEVVIKSVENDHILFGGDNYHYQSYPKFMSTFDDDHNHDGNPDRTDNYCLRDPHIIEDNGSRYLIFESNTGDENYQGEKQIYKWSNYGGDDAFNLKSFLNIVNNKHLYNLASWANGSIGILKLDDNEKNPSVAELYTPLVTSHMVTDEVERPSVVKMGGKYYLFTASRINKSTDAEGTVAAREAVGDDVVMLGFVSDSLRGKYRPLNGSGVVLTASVPADWRTSTYSYYAVPVEGSSDTLLVTSYMTNRGGIAGAENKSTWAPSFLIKMNADDTTEVLPKMTNQGDWIWDKSSESLVHVGDQNSAKLPNEDFNVDYYAVSGYGLKPHTYPTVDGSTGVSEAHGVLTVTVKDGKDKKADKPETPVSPTEGNHSVDDKTNKPGTSKPADNNQPSADKEDKPTNPTNPDSPARTPFPYYGDHSNDNNSSNDHHVAVPVKPSTGDSVGDRRPVAQAAEIATPVPKTIVATGPTVPTNTVKEESVTETEAPKPVKSEEKVQSHGVDKANEVTKSDESSKGNNTKVAAKLATTPKTPSDSEGSNSNILSILATIFAAIASLALLGYGLVTGKIHLPKK</sequence>
<protein>
    <recommendedName>
        <fullName evidence="6">Levansucrase</fullName>
        <ecNumber evidence="7">2.4.1.10</ecNumber>
    </recommendedName>
    <alternativeName>
        <fullName>Beta-D-fructofuranosyl transferase</fullName>
    </alternativeName>
    <alternativeName>
        <fullName evidence="5">Beta-D-fructosyltransferase</fullName>
        <shortName evidence="5">FTF</shortName>
    </alternativeName>
    <alternativeName>
        <fullName>Sucrose 6-fructosyl transferase</fullName>
    </alternativeName>
</protein>
<organism>
    <name type="scientific">Streptococcus salivarius</name>
    <dbReference type="NCBI Taxonomy" id="1304"/>
    <lineage>
        <taxon>Bacteria</taxon>
        <taxon>Bacillati</taxon>
        <taxon>Bacillota</taxon>
        <taxon>Bacilli</taxon>
        <taxon>Lactobacillales</taxon>
        <taxon>Streptococcaceae</taxon>
        <taxon>Streptococcus</taxon>
    </lineage>
</organism>